<gene>
    <name type="primary">mrpl28</name>
    <name type="ORF">NCU16833</name>
</gene>
<evidence type="ECO:0000256" key="1">
    <source>
        <dbReference type="SAM" id="MobiDB-lite"/>
    </source>
</evidence>
<evidence type="ECO:0000269" key="2">
    <source>
    </source>
</evidence>
<evidence type="ECO:0000303" key="3">
    <source>
    </source>
</evidence>
<evidence type="ECO:0000305" key="4"/>
<evidence type="ECO:0000305" key="5">
    <source>
    </source>
</evidence>
<evidence type="ECO:0007744" key="6">
    <source>
        <dbReference type="PDB" id="6YWE"/>
    </source>
</evidence>
<evidence type="ECO:0007744" key="7">
    <source>
        <dbReference type="PDB" id="6YWS"/>
    </source>
</evidence>
<comment type="function">
    <text evidence="5">Component of the mitochondrial ribosome (mitoribosome), a dedicated translation machinery responsible for the synthesis of mitochondrial genome-encoded proteins, including at least some of the essential transmembrane subunits of the mitochondrial respiratory chain. The mitoribosomes are attached to the mitochondrial inner membrane and translation products are cotranslationally integrated into the membrane.</text>
</comment>
<comment type="subunit">
    <text evidence="2">Component of the mitochondrial large ribosomal subunit (mt-LSU). Mature N.crassa 74S mitochondrial ribosomes consist of a small (37S) and a large (54S) subunit. The 37S small subunit contains a 16S ribosomal RNA (16S mt-rRNA) and 32 different proteins. The 54S large subunit contains a 23S rRNA (23S mt-rRNA) and 42 different proteins. mL40 is binding to NAD.</text>
</comment>
<comment type="subcellular location">
    <subcellularLocation>
        <location evidence="2">Mitochondrion</location>
    </subcellularLocation>
</comment>
<comment type="similarity">
    <text evidence="4">Belongs to the mitochondrion-specific ribosomal protein mL40 family.</text>
</comment>
<dbReference type="EMBL" id="CM002239">
    <property type="protein sequence ID" value="ESA42991.1"/>
    <property type="molecule type" value="Genomic_DNA"/>
</dbReference>
<dbReference type="RefSeq" id="XP_011394418.1">
    <property type="nucleotide sequence ID" value="XM_011396116.1"/>
</dbReference>
<dbReference type="PDB" id="6YWE">
    <property type="method" value="EM"/>
    <property type="resolution" value="2.99 A"/>
    <property type="chains" value="2=1-202"/>
</dbReference>
<dbReference type="PDB" id="6YWS">
    <property type="method" value="EM"/>
    <property type="resolution" value="2.74 A"/>
    <property type="chains" value="2=1-202"/>
</dbReference>
<dbReference type="PDB" id="6YWV">
    <property type="method" value="EM"/>
    <property type="resolution" value="3.03 A"/>
    <property type="chains" value="2=1-202"/>
</dbReference>
<dbReference type="PDB" id="6YWX">
    <property type="method" value="EM"/>
    <property type="resolution" value="3.10 A"/>
    <property type="chains" value="2=1-202"/>
</dbReference>
<dbReference type="PDB" id="6YWY">
    <property type="method" value="EM"/>
    <property type="resolution" value="3.05 A"/>
    <property type="chains" value="2=1-202"/>
</dbReference>
<dbReference type="PDBsum" id="6YWE"/>
<dbReference type="PDBsum" id="6YWS"/>
<dbReference type="PDBsum" id="6YWV"/>
<dbReference type="PDBsum" id="6YWX"/>
<dbReference type="PDBsum" id="6YWY"/>
<dbReference type="SMR" id="V5IQE0"/>
<dbReference type="STRING" id="367110.V5IQE0"/>
<dbReference type="PaxDb" id="5141-EFNCRP00000004114"/>
<dbReference type="EnsemblFungi" id="ESA42991">
    <property type="protein sequence ID" value="ESA42991"/>
    <property type="gene ID" value="NCU16833"/>
</dbReference>
<dbReference type="GeneID" id="23569682"/>
<dbReference type="KEGG" id="ncr:NCU16833"/>
<dbReference type="VEuPathDB" id="FungiDB:NCU16833"/>
<dbReference type="OrthoDB" id="2098203at2759"/>
<dbReference type="Proteomes" id="UP000001805">
    <property type="component" value="Chromosome 4, Linkage Group IV"/>
</dbReference>
<dbReference type="GO" id="GO:0005739">
    <property type="term" value="C:mitochondrion"/>
    <property type="evidence" value="ECO:0007669"/>
    <property type="project" value="UniProtKB-SubCell"/>
</dbReference>
<dbReference type="GO" id="GO:1990904">
    <property type="term" value="C:ribonucleoprotein complex"/>
    <property type="evidence" value="ECO:0007669"/>
    <property type="project" value="UniProtKB-KW"/>
</dbReference>
<dbReference type="GO" id="GO:0005840">
    <property type="term" value="C:ribosome"/>
    <property type="evidence" value="ECO:0007669"/>
    <property type="project" value="UniProtKB-KW"/>
</dbReference>
<dbReference type="GO" id="GO:0003735">
    <property type="term" value="F:structural constituent of ribosome"/>
    <property type="evidence" value="ECO:0007669"/>
    <property type="project" value="InterPro"/>
</dbReference>
<dbReference type="GO" id="GO:0032543">
    <property type="term" value="P:mitochondrial translation"/>
    <property type="evidence" value="ECO:0007669"/>
    <property type="project" value="InterPro"/>
</dbReference>
<dbReference type="Gene3D" id="6.10.250.3440">
    <property type="match status" value="1"/>
</dbReference>
<dbReference type="InterPro" id="IPR042831">
    <property type="entry name" value="Ribosomal_mL40_fung"/>
</dbReference>
<dbReference type="PANTHER" id="PTHR39150">
    <property type="entry name" value="54S RIBOSOMAL PROTEIN L28, MITOCHONDRIAL"/>
    <property type="match status" value="1"/>
</dbReference>
<dbReference type="PANTHER" id="PTHR39150:SF1">
    <property type="entry name" value="LARGE RIBOSOMAL SUBUNIT PROTEIN ML40"/>
    <property type="match status" value="1"/>
</dbReference>
<sequence>MSSTFTSLRGLATRLFAGGARPSPSSLLLPNKPATAALPTAIQHQQTASYASKGKSGPPAGMFSGQKAGSKKSKGPKQVDPRIINILRHFAVLSPKRIPPPLRFGRNRYLRHWTIHRAWLLFRRQQREQRERILMQQHQSMSNACEELRNTEGPGTRETGYLYRVAMLKNGVYGLKSIPIEYASRALVETPGRQAWNHEWKR</sequence>
<feature type="chain" id="PRO_0000458595" description="Large ribosomal subunit protein mL40">
    <location>
        <begin position="1"/>
        <end position="202"/>
    </location>
</feature>
<feature type="region of interest" description="Disordered" evidence="1">
    <location>
        <begin position="42"/>
        <end position="79"/>
    </location>
</feature>
<organism>
    <name type="scientific">Neurospora crassa (strain ATCC 24698 / 74-OR23-1A / CBS 708.71 / DSM 1257 / FGSC 987)</name>
    <dbReference type="NCBI Taxonomy" id="367110"/>
    <lineage>
        <taxon>Eukaryota</taxon>
        <taxon>Fungi</taxon>
        <taxon>Dikarya</taxon>
        <taxon>Ascomycota</taxon>
        <taxon>Pezizomycotina</taxon>
        <taxon>Sordariomycetes</taxon>
        <taxon>Sordariomycetidae</taxon>
        <taxon>Sordariales</taxon>
        <taxon>Sordariaceae</taxon>
        <taxon>Neurospora</taxon>
    </lineage>
</organism>
<reference key="1">
    <citation type="journal article" date="2003" name="Nature">
        <title>The genome sequence of the filamentous fungus Neurospora crassa.</title>
        <authorList>
            <person name="Galagan J.E."/>
            <person name="Calvo S.E."/>
            <person name="Borkovich K.A."/>
            <person name="Selker E.U."/>
            <person name="Read N.D."/>
            <person name="Jaffe D.B."/>
            <person name="FitzHugh W."/>
            <person name="Ma L.-J."/>
            <person name="Smirnov S."/>
            <person name="Purcell S."/>
            <person name="Rehman B."/>
            <person name="Elkins T."/>
            <person name="Engels R."/>
            <person name="Wang S."/>
            <person name="Nielsen C.B."/>
            <person name="Butler J."/>
            <person name="Endrizzi M."/>
            <person name="Qui D."/>
            <person name="Ianakiev P."/>
            <person name="Bell-Pedersen D."/>
            <person name="Nelson M.A."/>
            <person name="Werner-Washburne M."/>
            <person name="Selitrennikoff C.P."/>
            <person name="Kinsey J.A."/>
            <person name="Braun E.L."/>
            <person name="Zelter A."/>
            <person name="Schulte U."/>
            <person name="Kothe G.O."/>
            <person name="Jedd G."/>
            <person name="Mewes H.-W."/>
            <person name="Staben C."/>
            <person name="Marcotte E."/>
            <person name="Greenberg D."/>
            <person name="Roy A."/>
            <person name="Foley K."/>
            <person name="Naylor J."/>
            <person name="Stange-Thomann N."/>
            <person name="Barrett R."/>
            <person name="Gnerre S."/>
            <person name="Kamal M."/>
            <person name="Kamvysselis M."/>
            <person name="Mauceli E.W."/>
            <person name="Bielke C."/>
            <person name="Rudd S."/>
            <person name="Frishman D."/>
            <person name="Krystofova S."/>
            <person name="Rasmussen C."/>
            <person name="Metzenberg R.L."/>
            <person name="Perkins D.D."/>
            <person name="Kroken S."/>
            <person name="Cogoni C."/>
            <person name="Macino G."/>
            <person name="Catcheside D.E.A."/>
            <person name="Li W."/>
            <person name="Pratt R.J."/>
            <person name="Osmani S.A."/>
            <person name="DeSouza C.P.C."/>
            <person name="Glass N.L."/>
            <person name="Orbach M.J."/>
            <person name="Berglund J.A."/>
            <person name="Voelker R."/>
            <person name="Yarden O."/>
            <person name="Plamann M."/>
            <person name="Seiler S."/>
            <person name="Dunlap J.C."/>
            <person name="Radford A."/>
            <person name="Aramayo R."/>
            <person name="Natvig D.O."/>
            <person name="Alex L.A."/>
            <person name="Mannhaupt G."/>
            <person name="Ebbole D.J."/>
            <person name="Freitag M."/>
            <person name="Paulsen I."/>
            <person name="Sachs M.S."/>
            <person name="Lander E.S."/>
            <person name="Nusbaum C."/>
            <person name="Birren B.W."/>
        </authorList>
    </citation>
    <scope>NUCLEOTIDE SEQUENCE [LARGE SCALE GENOMIC DNA]</scope>
    <source>
        <strain>ATCC 24698 / 74-OR23-1A / CBS 708.71 / DSM 1257 / FGSC 987</strain>
    </source>
</reference>
<reference evidence="6 7" key="2">
    <citation type="journal article" date="2020" name="Nat. Commun.">
        <title>Analysis of translating mitoribosome reveals functional characteristics of translation in mitochondria of fungi.</title>
        <authorList>
            <person name="Itoh Y."/>
            <person name="Naschberger A."/>
            <person name="Mortezaei N."/>
            <person name="Herrmann J.M."/>
            <person name="Amunts A."/>
        </authorList>
    </citation>
    <scope>STRUCTURE BY ELECTRON MICROSCOPY (2.74 ANGSTROMS)</scope>
</reference>
<proteinExistence type="evidence at protein level"/>
<protein>
    <recommendedName>
        <fullName evidence="3">Large ribosomal subunit protein mL40</fullName>
    </recommendedName>
</protein>
<accession>V5IQE0</accession>
<name>RM28_NEUCR</name>
<keyword id="KW-0002">3D-structure</keyword>
<keyword id="KW-0496">Mitochondrion</keyword>
<keyword id="KW-1185">Reference proteome</keyword>
<keyword id="KW-0687">Ribonucleoprotein</keyword>
<keyword id="KW-0689">Ribosomal protein</keyword>
<keyword id="KW-0809">Transit peptide</keyword>